<keyword id="KW-0378">Hydrolase</keyword>
<keyword id="KW-0719">Serine esterase</keyword>
<gene>
    <name evidence="1" type="primary">frsA</name>
    <name type="ordered locus">ECSE_0259</name>
</gene>
<reference key="1">
    <citation type="journal article" date="2008" name="DNA Res.">
        <title>Complete genome sequence and comparative analysis of the wild-type commensal Escherichia coli strain SE11 isolated from a healthy adult.</title>
        <authorList>
            <person name="Oshima K."/>
            <person name="Toh H."/>
            <person name="Ogura Y."/>
            <person name="Sasamoto H."/>
            <person name="Morita H."/>
            <person name="Park S.-H."/>
            <person name="Ooka T."/>
            <person name="Iyoda S."/>
            <person name="Taylor T.D."/>
            <person name="Hayashi T."/>
            <person name="Itoh K."/>
            <person name="Hattori M."/>
        </authorList>
    </citation>
    <scope>NUCLEOTIDE SEQUENCE [LARGE SCALE GENOMIC DNA]</scope>
    <source>
        <strain>SE11</strain>
    </source>
</reference>
<evidence type="ECO:0000255" key="1">
    <source>
        <dbReference type="HAMAP-Rule" id="MF_01063"/>
    </source>
</evidence>
<comment type="function">
    <text evidence="1">Catalyzes the hydrolysis of esters.</text>
</comment>
<comment type="catalytic activity">
    <reaction evidence="1">
        <text>a carboxylic ester + H2O = an alcohol + a carboxylate + H(+)</text>
        <dbReference type="Rhea" id="RHEA:21164"/>
        <dbReference type="ChEBI" id="CHEBI:15377"/>
        <dbReference type="ChEBI" id="CHEBI:15378"/>
        <dbReference type="ChEBI" id="CHEBI:29067"/>
        <dbReference type="ChEBI" id="CHEBI:30879"/>
        <dbReference type="ChEBI" id="CHEBI:33308"/>
        <dbReference type="EC" id="3.1.1.1"/>
    </reaction>
</comment>
<comment type="similarity">
    <text evidence="1">Belongs to the FrsA family.</text>
</comment>
<dbReference type="EC" id="3.1.1.1" evidence="1"/>
<dbReference type="EMBL" id="AP009240">
    <property type="protein sequence ID" value="BAG75783.1"/>
    <property type="molecule type" value="Genomic_DNA"/>
</dbReference>
<dbReference type="RefSeq" id="WP_000189543.1">
    <property type="nucleotide sequence ID" value="NC_011415.1"/>
</dbReference>
<dbReference type="SMR" id="B6I019"/>
<dbReference type="ESTHER" id="ecoli-yafa">
    <property type="family name" value="Duf_1100-R"/>
</dbReference>
<dbReference type="KEGG" id="ecy:ECSE_0259"/>
<dbReference type="HOGENOM" id="CLU_036819_0_0_6"/>
<dbReference type="Proteomes" id="UP000008199">
    <property type="component" value="Chromosome"/>
</dbReference>
<dbReference type="GO" id="GO:0106435">
    <property type="term" value="F:carboxylesterase activity"/>
    <property type="evidence" value="ECO:0007669"/>
    <property type="project" value="UniProtKB-EC"/>
</dbReference>
<dbReference type="FunFam" id="3.40.50.1820:FF:000022">
    <property type="entry name" value="Esterase FrsA"/>
    <property type="match status" value="1"/>
</dbReference>
<dbReference type="Gene3D" id="3.40.50.1820">
    <property type="entry name" value="alpha/beta hydrolase"/>
    <property type="match status" value="1"/>
</dbReference>
<dbReference type="HAMAP" id="MF_01063">
    <property type="entry name" value="FrsA"/>
    <property type="match status" value="1"/>
</dbReference>
<dbReference type="InterPro" id="IPR029058">
    <property type="entry name" value="AB_hydrolase_fold"/>
</dbReference>
<dbReference type="InterPro" id="IPR043423">
    <property type="entry name" value="FrsA"/>
</dbReference>
<dbReference type="InterPro" id="IPR010520">
    <property type="entry name" value="FrsA-like"/>
</dbReference>
<dbReference type="InterPro" id="IPR050261">
    <property type="entry name" value="FrsA_esterase"/>
</dbReference>
<dbReference type="NCBIfam" id="NF003460">
    <property type="entry name" value="PRK05077.1"/>
    <property type="match status" value="1"/>
</dbReference>
<dbReference type="PANTHER" id="PTHR22946">
    <property type="entry name" value="DIENELACTONE HYDROLASE DOMAIN-CONTAINING PROTEIN-RELATED"/>
    <property type="match status" value="1"/>
</dbReference>
<dbReference type="PANTHER" id="PTHR22946:SF4">
    <property type="entry name" value="ESTERASE FRSA"/>
    <property type="match status" value="1"/>
</dbReference>
<dbReference type="Pfam" id="PF06500">
    <property type="entry name" value="FrsA-like"/>
    <property type="match status" value="1"/>
</dbReference>
<dbReference type="SUPFAM" id="SSF53474">
    <property type="entry name" value="alpha/beta-Hydrolases"/>
    <property type="match status" value="1"/>
</dbReference>
<name>FRSA_ECOSE</name>
<feature type="chain" id="PRO_1000136515" description="Esterase FrsA">
    <location>
        <begin position="1"/>
        <end position="414"/>
    </location>
</feature>
<organism>
    <name type="scientific">Escherichia coli (strain SE11)</name>
    <dbReference type="NCBI Taxonomy" id="409438"/>
    <lineage>
        <taxon>Bacteria</taxon>
        <taxon>Pseudomonadati</taxon>
        <taxon>Pseudomonadota</taxon>
        <taxon>Gammaproteobacteria</taxon>
        <taxon>Enterobacterales</taxon>
        <taxon>Enterobacteriaceae</taxon>
        <taxon>Escherichia</taxon>
    </lineage>
</organism>
<protein>
    <recommendedName>
        <fullName evidence="1">Esterase FrsA</fullName>
        <ecNumber evidence="1">3.1.1.1</ecNumber>
    </recommendedName>
</protein>
<accession>B6I019</accession>
<proteinExistence type="inferred from homology"/>
<sequence length="414" mass="46965">MTQANLSETLFKPRFKHPETSTLVRRFNHGAQPPVQSALDGKTIPHWYRMINRLMWIWRGIDPREILDVQARIVMSDAERTDDDLYDTVIGYRGGNWIYEWATQAMVWQQKACAEEDPQLSGRHWLHAATLYNIAAYPHLKGDDLAEQAQALSNRAYEEAAQRLPGTMRQMEFTVPGGAPITGFLHMPKGDGPFPTVLMCGGLDAMQTDYYSLYERYFAPRGIAMLTIDMPSVGFSSKWKLTQDSSLLHQHVLKALPNVPWVDHTRVAAFGFRFGANVAVRLAYLESPRLKAVACLGPVVHTLLSDFKCQQQVPEMYLDVLASRLGMHDASDEALRVELNRYSLKVQGLLGRRCPTPMLSGYWKNDPFSPEEDSRLITSSSADGKLLEIPFNPVYRNFDKGLQEITGWIEKRLC</sequence>